<sequence>MAINIRKTHPLLKIMNHALVDLPAPSNISLWWNFGSHLGLCLIIQILTGLFLAMHYTADISMAFSSVVHICRDVNYGWLIRNIHANGASLFFICVYLHIARGLYYGSYLYKETWNIGVILLFLLMATAFVGYVLPWGQMSFWGATVITNLLSAFPYIGDMLVQWIWGGFSVDNATLTRFFAFHFLLPFLILALTVIHLLFLHETGSNNPLGINSDADKISFHPYFSYKDLLGFFVMIFFLAALALFMPNLLGDAENFIPANPLVTPPHIKPEWYFLFAYAILRSIPNKLGGVLALLFSIFILMLVPLLHTSKQRSTIFRPMTQILFWFLVANSIILTWIGGQPVEQPFIMVGQIASISYFSLFLIIMPFTSWWENKILSLN</sequence>
<feature type="chain" id="PRO_0000060736" description="Cytochrome b">
    <location>
        <begin position="1"/>
        <end position="381"/>
    </location>
</feature>
<feature type="transmembrane region" description="Helical" evidence="2">
    <location>
        <begin position="34"/>
        <end position="54"/>
    </location>
</feature>
<feature type="transmembrane region" description="Helical" evidence="2">
    <location>
        <begin position="78"/>
        <end position="99"/>
    </location>
</feature>
<feature type="transmembrane region" description="Helical" evidence="2">
    <location>
        <begin position="114"/>
        <end position="134"/>
    </location>
</feature>
<feature type="transmembrane region" description="Helical" evidence="2">
    <location>
        <begin position="179"/>
        <end position="199"/>
    </location>
</feature>
<feature type="transmembrane region" description="Helical" evidence="2">
    <location>
        <begin position="227"/>
        <end position="247"/>
    </location>
</feature>
<feature type="transmembrane region" description="Helical" evidence="2">
    <location>
        <begin position="289"/>
        <end position="309"/>
    </location>
</feature>
<feature type="transmembrane region" description="Helical" evidence="2">
    <location>
        <begin position="321"/>
        <end position="341"/>
    </location>
</feature>
<feature type="transmembrane region" description="Helical" evidence="2">
    <location>
        <begin position="348"/>
        <end position="368"/>
    </location>
</feature>
<feature type="binding site" description="axial binding residue" evidence="2">
    <location>
        <position position="84"/>
    </location>
    <ligand>
        <name>heme b</name>
        <dbReference type="ChEBI" id="CHEBI:60344"/>
        <label>b562</label>
    </ligand>
    <ligandPart>
        <name>Fe</name>
        <dbReference type="ChEBI" id="CHEBI:18248"/>
    </ligandPart>
</feature>
<feature type="binding site" description="axial binding residue" evidence="2">
    <location>
        <position position="98"/>
    </location>
    <ligand>
        <name>heme b</name>
        <dbReference type="ChEBI" id="CHEBI:60344"/>
        <label>b566</label>
    </ligand>
    <ligandPart>
        <name>Fe</name>
        <dbReference type="ChEBI" id="CHEBI:18248"/>
    </ligandPart>
</feature>
<feature type="binding site" description="axial binding residue" evidence="2">
    <location>
        <position position="183"/>
    </location>
    <ligand>
        <name>heme b</name>
        <dbReference type="ChEBI" id="CHEBI:60344"/>
        <label>b562</label>
    </ligand>
    <ligandPart>
        <name>Fe</name>
        <dbReference type="ChEBI" id="CHEBI:18248"/>
    </ligandPart>
</feature>
<feature type="binding site" description="axial binding residue" evidence="2">
    <location>
        <position position="197"/>
    </location>
    <ligand>
        <name>heme b</name>
        <dbReference type="ChEBI" id="CHEBI:60344"/>
        <label>b566</label>
    </ligand>
    <ligandPart>
        <name>Fe</name>
        <dbReference type="ChEBI" id="CHEBI:18248"/>
    </ligandPart>
</feature>
<feature type="binding site" evidence="2">
    <location>
        <position position="202"/>
    </location>
    <ligand>
        <name>a ubiquinone</name>
        <dbReference type="ChEBI" id="CHEBI:16389"/>
    </ligand>
</feature>
<proteinExistence type="inferred from homology"/>
<geneLocation type="mitochondrion"/>
<dbReference type="EMBL" id="L08033">
    <property type="protein sequence ID" value="AAA31704.1"/>
    <property type="molecule type" value="Genomic_DNA"/>
</dbReference>
<dbReference type="SMR" id="P34867"/>
<dbReference type="GO" id="GO:0005743">
    <property type="term" value="C:mitochondrial inner membrane"/>
    <property type="evidence" value="ECO:0007669"/>
    <property type="project" value="UniProtKB-SubCell"/>
</dbReference>
<dbReference type="GO" id="GO:0045275">
    <property type="term" value="C:respiratory chain complex III"/>
    <property type="evidence" value="ECO:0007669"/>
    <property type="project" value="InterPro"/>
</dbReference>
<dbReference type="GO" id="GO:0046872">
    <property type="term" value="F:metal ion binding"/>
    <property type="evidence" value="ECO:0007669"/>
    <property type="project" value="UniProtKB-KW"/>
</dbReference>
<dbReference type="GO" id="GO:0008121">
    <property type="term" value="F:ubiquinol-cytochrome-c reductase activity"/>
    <property type="evidence" value="ECO:0007669"/>
    <property type="project" value="InterPro"/>
</dbReference>
<dbReference type="GO" id="GO:0006122">
    <property type="term" value="P:mitochondrial electron transport, ubiquinol to cytochrome c"/>
    <property type="evidence" value="ECO:0007669"/>
    <property type="project" value="TreeGrafter"/>
</dbReference>
<dbReference type="CDD" id="cd00290">
    <property type="entry name" value="cytochrome_b_C"/>
    <property type="match status" value="1"/>
</dbReference>
<dbReference type="CDD" id="cd00284">
    <property type="entry name" value="Cytochrome_b_N"/>
    <property type="match status" value="1"/>
</dbReference>
<dbReference type="FunFam" id="1.20.810.10:FF:000002">
    <property type="entry name" value="Cytochrome b"/>
    <property type="match status" value="1"/>
</dbReference>
<dbReference type="Gene3D" id="1.20.810.10">
    <property type="entry name" value="Cytochrome Bc1 Complex, Chain C"/>
    <property type="match status" value="1"/>
</dbReference>
<dbReference type="InterPro" id="IPR005798">
    <property type="entry name" value="Cyt_b/b6_C"/>
</dbReference>
<dbReference type="InterPro" id="IPR036150">
    <property type="entry name" value="Cyt_b/b6_C_sf"/>
</dbReference>
<dbReference type="InterPro" id="IPR005797">
    <property type="entry name" value="Cyt_b/b6_N"/>
</dbReference>
<dbReference type="InterPro" id="IPR027387">
    <property type="entry name" value="Cytb/b6-like_sf"/>
</dbReference>
<dbReference type="InterPro" id="IPR030689">
    <property type="entry name" value="Cytochrome_b"/>
</dbReference>
<dbReference type="InterPro" id="IPR048260">
    <property type="entry name" value="Cytochrome_b_C_euk/bac"/>
</dbReference>
<dbReference type="InterPro" id="IPR048259">
    <property type="entry name" value="Cytochrome_b_N_euk/bac"/>
</dbReference>
<dbReference type="InterPro" id="IPR016174">
    <property type="entry name" value="Di-haem_cyt_TM"/>
</dbReference>
<dbReference type="PANTHER" id="PTHR19271">
    <property type="entry name" value="CYTOCHROME B"/>
    <property type="match status" value="1"/>
</dbReference>
<dbReference type="PANTHER" id="PTHR19271:SF16">
    <property type="entry name" value="CYTOCHROME B"/>
    <property type="match status" value="1"/>
</dbReference>
<dbReference type="Pfam" id="PF00032">
    <property type="entry name" value="Cytochrom_B_C"/>
    <property type="match status" value="1"/>
</dbReference>
<dbReference type="Pfam" id="PF00033">
    <property type="entry name" value="Cytochrome_B"/>
    <property type="match status" value="1"/>
</dbReference>
<dbReference type="PIRSF" id="PIRSF038885">
    <property type="entry name" value="COB"/>
    <property type="match status" value="1"/>
</dbReference>
<dbReference type="SUPFAM" id="SSF81648">
    <property type="entry name" value="a domain/subunit of cytochrome bc1 complex (Ubiquinol-cytochrome c reductase)"/>
    <property type="match status" value="1"/>
</dbReference>
<dbReference type="SUPFAM" id="SSF81342">
    <property type="entry name" value="Transmembrane di-heme cytochromes"/>
    <property type="match status" value="1"/>
</dbReference>
<dbReference type="PROSITE" id="PS51003">
    <property type="entry name" value="CYTB_CTER"/>
    <property type="match status" value="1"/>
</dbReference>
<dbReference type="PROSITE" id="PS51002">
    <property type="entry name" value="CYTB_NTER"/>
    <property type="match status" value="1"/>
</dbReference>
<keyword id="KW-0249">Electron transport</keyword>
<keyword id="KW-0349">Heme</keyword>
<keyword id="KW-0408">Iron</keyword>
<keyword id="KW-0472">Membrane</keyword>
<keyword id="KW-0479">Metal-binding</keyword>
<keyword id="KW-0496">Mitochondrion</keyword>
<keyword id="KW-0999">Mitochondrion inner membrane</keyword>
<keyword id="KW-0679">Respiratory chain</keyword>
<keyword id="KW-0812">Transmembrane</keyword>
<keyword id="KW-1133">Transmembrane helix</keyword>
<keyword id="KW-0813">Transport</keyword>
<keyword id="KW-0830">Ubiquinone</keyword>
<reference key="1">
    <citation type="journal article" date="1992" name="Nature">
        <title>Rates of mitochondrial DNA evolution in sharks are slow compared with mammals.</title>
        <authorList>
            <person name="Martin A.P."/>
            <person name="Naylor G.J.P."/>
            <person name="Palumbi S.R."/>
        </authorList>
    </citation>
    <scope>NUCLEOTIDE SEQUENCE [GENOMIC DNA]</scope>
</reference>
<protein>
    <recommendedName>
        <fullName>Cytochrome b</fullName>
    </recommendedName>
    <alternativeName>
        <fullName>Complex III subunit 3</fullName>
    </alternativeName>
    <alternativeName>
        <fullName>Complex III subunit III</fullName>
    </alternativeName>
    <alternativeName>
        <fullName>Cytochrome b-c1 complex subunit 3</fullName>
    </alternativeName>
    <alternativeName>
        <fullName>Ubiquinol-cytochrome-c reductase complex cytochrome b subunit</fullName>
    </alternativeName>
</protein>
<accession>P34867</accession>
<evidence type="ECO:0000250" key="1"/>
<evidence type="ECO:0000250" key="2">
    <source>
        <dbReference type="UniProtKB" id="P00157"/>
    </source>
</evidence>
<evidence type="ECO:0000255" key="3">
    <source>
        <dbReference type="PROSITE-ProRule" id="PRU00967"/>
    </source>
</evidence>
<evidence type="ECO:0000255" key="4">
    <source>
        <dbReference type="PROSITE-ProRule" id="PRU00968"/>
    </source>
</evidence>
<name>CYB_CARPO</name>
<organism>
    <name type="scientific">Carcharhinus porosus</name>
    <name type="common">Smalltail shark</name>
    <dbReference type="NCBI Taxonomy" id="7810"/>
    <lineage>
        <taxon>Eukaryota</taxon>
        <taxon>Metazoa</taxon>
        <taxon>Chordata</taxon>
        <taxon>Craniata</taxon>
        <taxon>Vertebrata</taxon>
        <taxon>Chondrichthyes</taxon>
        <taxon>Elasmobranchii</taxon>
        <taxon>Galeomorphii</taxon>
        <taxon>Galeoidea</taxon>
        <taxon>Carcharhiniformes</taxon>
        <taxon>Carcharhinidae</taxon>
        <taxon>Carcharhinus</taxon>
    </lineage>
</organism>
<gene>
    <name type="primary">mt-cyb</name>
    <name type="synonym">cob</name>
    <name type="synonym">cytb</name>
    <name type="synonym">mtcyb</name>
</gene>
<comment type="function">
    <text evidence="2">Component of the ubiquinol-cytochrome c reductase complex (complex III or cytochrome b-c1 complex) that is part of the mitochondrial respiratory chain. The b-c1 complex mediates electron transfer from ubiquinol to cytochrome c. Contributes to the generation of a proton gradient across the mitochondrial membrane that is then used for ATP synthesis.</text>
</comment>
<comment type="cofactor">
    <cofactor evidence="2">
        <name>heme b</name>
        <dbReference type="ChEBI" id="CHEBI:60344"/>
    </cofactor>
    <text evidence="2">Binds 2 heme b groups non-covalently.</text>
</comment>
<comment type="subunit">
    <text evidence="2">The cytochrome bc1 complex contains 3 respiratory subunits (MT-CYB, CYC1 and UQCRFS1), 2 core proteins (UQCRC1 and UQCRC2) and probably 6 low-molecular weight proteins.</text>
</comment>
<comment type="subcellular location">
    <subcellularLocation>
        <location evidence="2">Mitochondrion inner membrane</location>
        <topology evidence="2">Multi-pass membrane protein</topology>
    </subcellularLocation>
</comment>
<comment type="miscellaneous">
    <text evidence="1">Heme 1 (or BL or b562) is low-potential and absorbs at about 562 nm, and heme 2 (or BH or b566) is high-potential and absorbs at about 566 nm.</text>
</comment>
<comment type="similarity">
    <text evidence="3 4">Belongs to the cytochrome b family.</text>
</comment>
<comment type="caution">
    <text evidence="2">The full-length protein contains only eight transmembrane helices, not nine as predicted by bioinformatics tools.</text>
</comment>